<gene>
    <name type="ordered locus">cbdbA1256</name>
</gene>
<comment type="function">
    <text evidence="1">Nucleotide-binding protein.</text>
</comment>
<comment type="similarity">
    <text evidence="1">Belongs to the YajQ family.</text>
</comment>
<sequence length="163" mass="18541">MPSLDVVSTVDMQAMDNAVNNAKRDLGNRYDFKNSKYELELNRKDKAIEIVAEDEFKLKAVIETLIQQCVRFKLDSKCLDIADSHTVSLGAAKTEIKIKDGLTKETASKITKFIKSTKLKLDSAIQGEQIRITGKQIDDLQEIMRLLSEQDFDVPLQYVNMKR</sequence>
<evidence type="ECO:0000255" key="1">
    <source>
        <dbReference type="HAMAP-Rule" id="MF_00632"/>
    </source>
</evidence>
<name>Y1256_DEHMC</name>
<protein>
    <recommendedName>
        <fullName evidence="1">Nucleotide-binding protein cbdbA1256</fullName>
    </recommendedName>
</protein>
<accession>Q3ZYJ9</accession>
<feature type="chain" id="PRO_1000147300" description="Nucleotide-binding protein cbdbA1256">
    <location>
        <begin position="1"/>
        <end position="163"/>
    </location>
</feature>
<proteinExistence type="inferred from homology"/>
<dbReference type="EMBL" id="AJ965256">
    <property type="protein sequence ID" value="CAI83322.1"/>
    <property type="molecule type" value="Genomic_DNA"/>
</dbReference>
<dbReference type="RefSeq" id="WP_011309673.1">
    <property type="nucleotide sequence ID" value="NC_007356.1"/>
</dbReference>
<dbReference type="SMR" id="Q3ZYJ9"/>
<dbReference type="KEGG" id="deh:cbdbA1256"/>
<dbReference type="HOGENOM" id="CLU_099839_1_0_0"/>
<dbReference type="Proteomes" id="UP000000433">
    <property type="component" value="Chromosome"/>
</dbReference>
<dbReference type="GO" id="GO:0005829">
    <property type="term" value="C:cytosol"/>
    <property type="evidence" value="ECO:0007669"/>
    <property type="project" value="TreeGrafter"/>
</dbReference>
<dbReference type="GO" id="GO:0000166">
    <property type="term" value="F:nucleotide binding"/>
    <property type="evidence" value="ECO:0007669"/>
    <property type="project" value="TreeGrafter"/>
</dbReference>
<dbReference type="CDD" id="cd11740">
    <property type="entry name" value="YajQ_like"/>
    <property type="match status" value="1"/>
</dbReference>
<dbReference type="Gene3D" id="3.30.70.860">
    <property type="match status" value="1"/>
</dbReference>
<dbReference type="Gene3D" id="3.30.70.990">
    <property type="entry name" value="YajQ-like, domain 2"/>
    <property type="match status" value="1"/>
</dbReference>
<dbReference type="HAMAP" id="MF_00632">
    <property type="entry name" value="YajQ"/>
    <property type="match status" value="1"/>
</dbReference>
<dbReference type="InterPro" id="IPR007551">
    <property type="entry name" value="DUF520"/>
</dbReference>
<dbReference type="InterPro" id="IPR035571">
    <property type="entry name" value="UPF0234-like_C"/>
</dbReference>
<dbReference type="InterPro" id="IPR035570">
    <property type="entry name" value="UPF0234_N"/>
</dbReference>
<dbReference type="InterPro" id="IPR036183">
    <property type="entry name" value="YajQ-like_sf"/>
</dbReference>
<dbReference type="NCBIfam" id="NF003819">
    <property type="entry name" value="PRK05412.1"/>
    <property type="match status" value="1"/>
</dbReference>
<dbReference type="PANTHER" id="PTHR30476">
    <property type="entry name" value="UPF0234 PROTEIN YAJQ"/>
    <property type="match status" value="1"/>
</dbReference>
<dbReference type="PANTHER" id="PTHR30476:SF0">
    <property type="entry name" value="UPF0234 PROTEIN YAJQ"/>
    <property type="match status" value="1"/>
</dbReference>
<dbReference type="Pfam" id="PF04461">
    <property type="entry name" value="DUF520"/>
    <property type="match status" value="1"/>
</dbReference>
<dbReference type="SUPFAM" id="SSF89963">
    <property type="entry name" value="YajQ-like"/>
    <property type="match status" value="2"/>
</dbReference>
<keyword id="KW-0547">Nucleotide-binding</keyword>
<reference key="1">
    <citation type="journal article" date="2005" name="Nat. Biotechnol.">
        <title>Genome sequence of the chlorinated compound-respiring bacterium Dehalococcoides species strain CBDB1.</title>
        <authorList>
            <person name="Kube M."/>
            <person name="Beck A."/>
            <person name="Zinder S.H."/>
            <person name="Kuhl H."/>
            <person name="Reinhardt R."/>
            <person name="Adrian L."/>
        </authorList>
    </citation>
    <scope>NUCLEOTIDE SEQUENCE [LARGE SCALE GENOMIC DNA]</scope>
    <source>
        <strain>CBDB1</strain>
    </source>
</reference>
<organism>
    <name type="scientific">Dehalococcoides mccartyi (strain CBDB1)</name>
    <dbReference type="NCBI Taxonomy" id="255470"/>
    <lineage>
        <taxon>Bacteria</taxon>
        <taxon>Bacillati</taxon>
        <taxon>Chloroflexota</taxon>
        <taxon>Dehalococcoidia</taxon>
        <taxon>Dehalococcoidales</taxon>
        <taxon>Dehalococcoidaceae</taxon>
        <taxon>Dehalococcoides</taxon>
    </lineage>
</organism>